<proteinExistence type="inferred from homology"/>
<keyword id="KW-0378">Hydrolase</keyword>
<keyword id="KW-0460">Magnesium</keyword>
<keyword id="KW-0479">Metal-binding</keyword>
<keyword id="KW-0546">Nucleotide metabolism</keyword>
<organism>
    <name type="scientific">Chlamydia abortus (strain DSM 27085 / S26/3)</name>
    <name type="common">Chlamydophila abortus</name>
    <dbReference type="NCBI Taxonomy" id="218497"/>
    <lineage>
        <taxon>Bacteria</taxon>
        <taxon>Pseudomonadati</taxon>
        <taxon>Chlamydiota</taxon>
        <taxon>Chlamydiia</taxon>
        <taxon>Chlamydiales</taxon>
        <taxon>Chlamydiaceae</taxon>
        <taxon>Chlamydia/Chlamydophila group</taxon>
        <taxon>Chlamydia</taxon>
    </lineage>
</organism>
<feature type="chain" id="PRO_0000231405" description="Deoxyuridine 5'-triphosphate nucleotidohydrolase">
    <location>
        <begin position="1"/>
        <end position="147"/>
    </location>
</feature>
<feature type="binding site" evidence="1">
    <location>
        <begin position="63"/>
        <end position="65"/>
    </location>
    <ligand>
        <name>substrate</name>
    </ligand>
</feature>
<feature type="binding site" evidence="1">
    <location>
        <position position="76"/>
    </location>
    <ligand>
        <name>substrate</name>
    </ligand>
</feature>
<feature type="binding site" evidence="1">
    <location>
        <begin position="80"/>
        <end position="82"/>
    </location>
    <ligand>
        <name>substrate</name>
    </ligand>
</feature>
<dbReference type="EC" id="3.6.1.23" evidence="1"/>
<dbReference type="EMBL" id="CR848038">
    <property type="protein sequence ID" value="CAH63788.1"/>
    <property type="molecule type" value="Genomic_DNA"/>
</dbReference>
<dbReference type="RefSeq" id="WP_006343986.1">
    <property type="nucleotide sequence ID" value="NC_004552.2"/>
</dbReference>
<dbReference type="SMR" id="Q5L6D8"/>
<dbReference type="KEGG" id="cab:CAB338A"/>
<dbReference type="eggNOG" id="COG0756">
    <property type="taxonomic scope" value="Bacteria"/>
</dbReference>
<dbReference type="HOGENOM" id="CLU_068508_1_2_0"/>
<dbReference type="OrthoDB" id="9809956at2"/>
<dbReference type="UniPathway" id="UPA00610">
    <property type="reaction ID" value="UER00666"/>
</dbReference>
<dbReference type="Proteomes" id="UP000001012">
    <property type="component" value="Chromosome"/>
</dbReference>
<dbReference type="GO" id="GO:0004170">
    <property type="term" value="F:dUTP diphosphatase activity"/>
    <property type="evidence" value="ECO:0007669"/>
    <property type="project" value="UniProtKB-UniRule"/>
</dbReference>
<dbReference type="GO" id="GO:0000287">
    <property type="term" value="F:magnesium ion binding"/>
    <property type="evidence" value="ECO:0007669"/>
    <property type="project" value="UniProtKB-UniRule"/>
</dbReference>
<dbReference type="GO" id="GO:0006226">
    <property type="term" value="P:dUMP biosynthetic process"/>
    <property type="evidence" value="ECO:0007669"/>
    <property type="project" value="UniProtKB-UniRule"/>
</dbReference>
<dbReference type="GO" id="GO:0046081">
    <property type="term" value="P:dUTP catabolic process"/>
    <property type="evidence" value="ECO:0007669"/>
    <property type="project" value="InterPro"/>
</dbReference>
<dbReference type="CDD" id="cd07557">
    <property type="entry name" value="trimeric_dUTPase"/>
    <property type="match status" value="1"/>
</dbReference>
<dbReference type="Gene3D" id="2.70.40.10">
    <property type="match status" value="1"/>
</dbReference>
<dbReference type="HAMAP" id="MF_00116">
    <property type="entry name" value="dUTPase_bact"/>
    <property type="match status" value="1"/>
</dbReference>
<dbReference type="InterPro" id="IPR008181">
    <property type="entry name" value="dUTPase"/>
</dbReference>
<dbReference type="InterPro" id="IPR029054">
    <property type="entry name" value="dUTPase-like"/>
</dbReference>
<dbReference type="InterPro" id="IPR036157">
    <property type="entry name" value="dUTPase-like_sf"/>
</dbReference>
<dbReference type="InterPro" id="IPR033704">
    <property type="entry name" value="dUTPase_trimeric"/>
</dbReference>
<dbReference type="NCBIfam" id="TIGR00576">
    <property type="entry name" value="dut"/>
    <property type="match status" value="1"/>
</dbReference>
<dbReference type="NCBIfam" id="NF001862">
    <property type="entry name" value="PRK00601.1"/>
    <property type="match status" value="1"/>
</dbReference>
<dbReference type="PANTHER" id="PTHR11241">
    <property type="entry name" value="DEOXYURIDINE 5'-TRIPHOSPHATE NUCLEOTIDOHYDROLASE"/>
    <property type="match status" value="1"/>
</dbReference>
<dbReference type="PANTHER" id="PTHR11241:SF0">
    <property type="entry name" value="DEOXYURIDINE 5'-TRIPHOSPHATE NUCLEOTIDOHYDROLASE"/>
    <property type="match status" value="1"/>
</dbReference>
<dbReference type="Pfam" id="PF00692">
    <property type="entry name" value="dUTPase"/>
    <property type="match status" value="1"/>
</dbReference>
<dbReference type="SUPFAM" id="SSF51283">
    <property type="entry name" value="dUTPase-like"/>
    <property type="match status" value="1"/>
</dbReference>
<reference key="1">
    <citation type="journal article" date="2005" name="Genome Res.">
        <title>The Chlamydophila abortus genome sequence reveals an array of variable proteins that contribute to interspecies variation.</title>
        <authorList>
            <person name="Thomson N.R."/>
            <person name="Yeats C."/>
            <person name="Bell K."/>
            <person name="Holden M.T.G."/>
            <person name="Bentley S.D."/>
            <person name="Livingstone M."/>
            <person name="Cerdeno-Tarraga A.-M."/>
            <person name="Harris B."/>
            <person name="Doggett J."/>
            <person name="Ormond D."/>
            <person name="Mungall K."/>
            <person name="Clarke K."/>
            <person name="Feltwell T."/>
            <person name="Hance Z."/>
            <person name="Sanders M."/>
            <person name="Quail M.A."/>
            <person name="Price C."/>
            <person name="Barrell B.G."/>
            <person name="Parkhill J."/>
            <person name="Longbottom D."/>
        </authorList>
    </citation>
    <scope>NUCLEOTIDE SEQUENCE [LARGE SCALE GENOMIC DNA]</scope>
    <source>
        <strain>DSM 27085 / S26/3</strain>
    </source>
</reference>
<gene>
    <name evidence="1" type="primary">dut</name>
    <name type="ordered locus">CAB338.1</name>
</gene>
<comment type="function">
    <text evidence="1">This enzyme is involved in nucleotide metabolism: it produces dUMP, the immediate precursor of thymidine nucleotides and it decreases the intracellular concentration of dUTP so that uracil cannot be incorporated into DNA.</text>
</comment>
<comment type="catalytic activity">
    <reaction evidence="1">
        <text>dUTP + H2O = dUMP + diphosphate + H(+)</text>
        <dbReference type="Rhea" id="RHEA:10248"/>
        <dbReference type="ChEBI" id="CHEBI:15377"/>
        <dbReference type="ChEBI" id="CHEBI:15378"/>
        <dbReference type="ChEBI" id="CHEBI:33019"/>
        <dbReference type="ChEBI" id="CHEBI:61555"/>
        <dbReference type="ChEBI" id="CHEBI:246422"/>
        <dbReference type="EC" id="3.6.1.23"/>
    </reaction>
</comment>
<comment type="cofactor">
    <cofactor evidence="1">
        <name>Mg(2+)</name>
        <dbReference type="ChEBI" id="CHEBI:18420"/>
    </cofactor>
</comment>
<comment type="pathway">
    <text evidence="1">Pyrimidine metabolism; dUMP biosynthesis; dUMP from dCTP (dUTP route): step 2/2.</text>
</comment>
<comment type="similarity">
    <text evidence="1">Belongs to the dUTPase family.</text>
</comment>
<protein>
    <recommendedName>
        <fullName evidence="1">Deoxyuridine 5'-triphosphate nucleotidohydrolase</fullName>
        <shortName evidence="1">dUTPase</shortName>
        <ecNumber evidence="1">3.6.1.23</ecNumber>
    </recommendedName>
    <alternativeName>
        <fullName evidence="1">dUTP pyrophosphatase</fullName>
    </alternativeName>
</protein>
<accession>Q5L6D8</accession>
<sequence>MTILCELESGVSLPEYATEGASGADLRANIKEPMAVLPGQRVLVPTGIKMQIPQGYEVQVRPRSGFALKHGIMVVNSPGTIDADYRGEVCIILANFGESTFIIEPKMRIAQAVVAPVVQAKFIAVDQEEGLTTTSRGSRGFGHTGEK</sequence>
<evidence type="ECO:0000255" key="1">
    <source>
        <dbReference type="HAMAP-Rule" id="MF_00116"/>
    </source>
</evidence>
<name>DUT_CHLAB</name>